<keyword id="KW-0009">Actin-binding</keyword>
<keyword id="KW-0963">Cytoplasm</keyword>
<keyword id="KW-0206">Cytoskeleton</keyword>
<keyword id="KW-0446">Lipid-binding</keyword>
<organism>
    <name type="scientific">Plasmodium berghei</name>
    <dbReference type="NCBI Taxonomy" id="5821"/>
    <lineage>
        <taxon>Eukaryota</taxon>
        <taxon>Sar</taxon>
        <taxon>Alveolata</taxon>
        <taxon>Apicomplexa</taxon>
        <taxon>Aconoidasida</taxon>
        <taxon>Haemosporida</taxon>
        <taxon>Plasmodiidae</taxon>
        <taxon>Plasmodium</taxon>
        <taxon>Plasmodium (Vinckeia)</taxon>
    </lineage>
</organism>
<evidence type="ECO:0000250" key="1"/>
<evidence type="ECO:0000250" key="2">
    <source>
        <dbReference type="UniProtKB" id="P07274"/>
    </source>
</evidence>
<evidence type="ECO:0000250" key="3">
    <source>
        <dbReference type="UniProtKB" id="P86294"/>
    </source>
</evidence>
<evidence type="ECO:0000255" key="4"/>
<evidence type="ECO:0000269" key="5">
    <source>
    </source>
</evidence>
<evidence type="ECO:0000305" key="6"/>
<evidence type="ECO:0000312" key="7">
    <source>
        <dbReference type="EMBL" id="ACI15365.1"/>
    </source>
</evidence>
<accession>B8QYR5</accession>
<comment type="function">
    <text evidence="3">Essential for the invasive blood stages of the parasite. Binds to proline rich sequences in various regulatory formin-like proteins and also to membrane phospholipids. Binds to actin and affects the structure of the cytoskeleton. Weakly sequesters actin monomers (By similarity).</text>
</comment>
<comment type="subunit">
    <text evidence="1">Binds actin.</text>
</comment>
<comment type="subcellular location">
    <subcellularLocation>
        <location evidence="2">Cytoplasm</location>
        <location evidence="2">Cytoskeleton</location>
    </subcellularLocation>
</comment>
<comment type="developmental stage">
    <text evidence="5">Expressed throughout the life cycle: oocyst sporozoites that invade the mosquito salivary glands, salivary gland sporozoites infectious to the mammalian liver, and schizonts/merozoites that invade erythrocytes.</text>
</comment>
<comment type="domain">
    <text>The actin binding residues are poorly conserved between Plasmodium and other organisms. The Plasmodium-specific profilin mini-domain may have a role in binding to membrane phospholipids.</text>
</comment>
<comment type="similarity">
    <text evidence="4">Belongs to the profilin family.</text>
</comment>
<name>PROF_PLABE</name>
<protein>
    <recommendedName>
        <fullName evidence="7">Profilin</fullName>
    </recommendedName>
</protein>
<sequence>MEEYSWENFLNDKLLATNQVSAAGLASEEDGVVYECVATPDENNPDFDKWSLFYKEDYDIEIEDENGSKTTKTITEGQSILTMFNEGYASDGIWLGGTKYQFINMDKGLEYEGHSFDVATCAKSKGGMHIIKVGGGHILIVLYDEEKEQDRGNSKNAALAFSKELIESTDTGAA</sequence>
<proteinExistence type="evidence at transcript level"/>
<feature type="chain" id="PRO_0000377709" description="Profilin">
    <location>
        <begin position="1"/>
        <end position="174"/>
    </location>
</feature>
<feature type="region of interest" description="Pro-rich sequence-binding" evidence="3">
    <location>
        <begin position="4"/>
        <end position="9"/>
    </location>
</feature>
<feature type="region of interest" description="Actin-binding" evidence="3 4">
    <location>
        <begin position="99"/>
        <end position="111"/>
    </location>
</feature>
<feature type="region of interest" description="Actin-binding" evidence="3 4">
    <location>
        <begin position="151"/>
        <end position="155"/>
    </location>
</feature>
<feature type="short sequence motif" description="Plasmodium-specific profilin mini-domain" evidence="3">
    <location>
        <begin position="47"/>
        <end position="53"/>
    </location>
</feature>
<feature type="site" description="Interaction with Pro-rich sequence" evidence="1">
    <location>
        <position position="34"/>
    </location>
</feature>
<feature type="site" description="Interaction with actin" evidence="4">
    <location>
        <position position="88"/>
    </location>
</feature>
<dbReference type="EMBL" id="EU735101">
    <property type="protein sequence ID" value="ACI15365.1"/>
    <property type="molecule type" value="Genomic_DNA"/>
</dbReference>
<dbReference type="SMR" id="B8QYR5"/>
<dbReference type="VEuPathDB" id="PlasmoDB:PBANKA_0833000"/>
<dbReference type="OMA" id="DKWTLFY"/>
<dbReference type="OrthoDB" id="421374at2759"/>
<dbReference type="GO" id="GO:0015629">
    <property type="term" value="C:actin cytoskeleton"/>
    <property type="evidence" value="ECO:0000250"/>
    <property type="project" value="UniProtKB"/>
</dbReference>
<dbReference type="GO" id="GO:0005737">
    <property type="term" value="C:cytoplasm"/>
    <property type="evidence" value="ECO:0007669"/>
    <property type="project" value="UniProtKB-KW"/>
</dbReference>
<dbReference type="GO" id="GO:0003785">
    <property type="term" value="F:actin monomer binding"/>
    <property type="evidence" value="ECO:0000250"/>
    <property type="project" value="UniProtKB"/>
</dbReference>
<dbReference type="GO" id="GO:0005543">
    <property type="term" value="F:phospholipid binding"/>
    <property type="evidence" value="ECO:0000250"/>
    <property type="project" value="UniProtKB"/>
</dbReference>
<dbReference type="GO" id="GO:0030036">
    <property type="term" value="P:actin cytoskeleton organization"/>
    <property type="evidence" value="ECO:0000250"/>
    <property type="project" value="UniProtKB"/>
</dbReference>
<dbReference type="GO" id="GO:0060327">
    <property type="term" value="P:cytoplasmic actin-based contraction involved in cell motility"/>
    <property type="evidence" value="ECO:0000250"/>
    <property type="project" value="UniProtKB"/>
</dbReference>
<dbReference type="Gene3D" id="3.30.450.30">
    <property type="entry name" value="Dynein light chain 2a, cytoplasmic"/>
    <property type="match status" value="1"/>
</dbReference>
<dbReference type="InterPro" id="IPR048278">
    <property type="entry name" value="PFN"/>
</dbReference>
<dbReference type="InterPro" id="IPR036140">
    <property type="entry name" value="PFN_sf"/>
</dbReference>
<dbReference type="InterPro" id="IPR016814">
    <property type="entry name" value="Profilin_apicomplexa"/>
</dbReference>
<dbReference type="Pfam" id="PF00235">
    <property type="entry name" value="Profilin"/>
    <property type="match status" value="1"/>
</dbReference>
<dbReference type="PIRSF" id="PIRSF022993">
    <property type="entry name" value="Profilin_apicomplexa"/>
    <property type="match status" value="1"/>
</dbReference>
<dbReference type="SUPFAM" id="SSF55770">
    <property type="entry name" value="Profilin (actin-binding protein)"/>
    <property type="match status" value="1"/>
</dbReference>
<reference evidence="6 7" key="1">
    <citation type="journal article" date="2008" name="Structure">
        <title>Structural basis for parasite-specific functions of the divergent profilin of Plasmodium falciparum.</title>
        <authorList>
            <person name="Kursula I."/>
            <person name="Kursula P."/>
            <person name="Ganter M."/>
            <person name="Panjikar S."/>
            <person name="Matuschewski K."/>
            <person name="Schueler H."/>
        </authorList>
    </citation>
    <scope>NUCLEOTIDE SEQUENCE [GENOMIC DNA]</scope>
    <scope>DEVELOPMENTAL STAGE</scope>
    <source>
        <strain evidence="7">ANKA</strain>
    </source>
</reference>